<organism>
    <name type="scientific">Escherichia coli O17:K52:H18 (strain UMN026 / ExPEC)</name>
    <dbReference type="NCBI Taxonomy" id="585056"/>
    <lineage>
        <taxon>Bacteria</taxon>
        <taxon>Pseudomonadati</taxon>
        <taxon>Pseudomonadota</taxon>
        <taxon>Gammaproteobacteria</taxon>
        <taxon>Enterobacterales</taxon>
        <taxon>Enterobacteriaceae</taxon>
        <taxon>Escherichia</taxon>
    </lineage>
</organism>
<sequence length="505" mass="59332">MAQIDFRKKINWHRRYRSPQGVKTEHEILRIFESDRGRIINSPAIRRLQQKTQVFPLERNAAVRTRLTHSMEVQQVGRYIAKEILSRLKELKLLEAYGLDELTGPFESIVEMSCLMHDIGNPPFGHFGEAAINDWFRQRLHPEDAESQPLTDDRCSVAALRLRDGEEPLNELRRKIRQDLCHFEGNAQGIRLVHTLMRMNLTWAQVGGILKYTRPAWWRGETPETHHYLMKKPGYYLSEEAYIARLRKELNLALYSRFPLTWIMEAADDISYCVADLEDAVEKRIFTVEQLYHHLHEAWGQHEKGSLFSLVVENAWEKSRSNSLSRSTEDQFFMYLRVNTLNKLVPYAAQRFIDNLPAIFAGTFNHALLEDASECSDLLKLYKNVAVKHVFSHPDVEQLELQGYRVISGLLEIYRPLLSLSLSDFTELVEKERVKRFPIESRLFNKLSTRHRLAYVEAVSKLPSDSPEFPLWEYYYRCRLLQDYISGMTDLYAWDEYRRLMAVEQ</sequence>
<gene>
    <name evidence="1" type="primary">dgt</name>
    <name type="ordered locus">ECUMN_0158</name>
</gene>
<accession>B7N829</accession>
<proteinExistence type="inferred from homology"/>
<evidence type="ECO:0000255" key="1">
    <source>
        <dbReference type="HAMAP-Rule" id="MF_00030"/>
    </source>
</evidence>
<evidence type="ECO:0000255" key="2">
    <source>
        <dbReference type="PROSITE-ProRule" id="PRU01175"/>
    </source>
</evidence>
<reference key="1">
    <citation type="journal article" date="2009" name="PLoS Genet.">
        <title>Organised genome dynamics in the Escherichia coli species results in highly diverse adaptive paths.</title>
        <authorList>
            <person name="Touchon M."/>
            <person name="Hoede C."/>
            <person name="Tenaillon O."/>
            <person name="Barbe V."/>
            <person name="Baeriswyl S."/>
            <person name="Bidet P."/>
            <person name="Bingen E."/>
            <person name="Bonacorsi S."/>
            <person name="Bouchier C."/>
            <person name="Bouvet O."/>
            <person name="Calteau A."/>
            <person name="Chiapello H."/>
            <person name="Clermont O."/>
            <person name="Cruveiller S."/>
            <person name="Danchin A."/>
            <person name="Diard M."/>
            <person name="Dossat C."/>
            <person name="Karoui M.E."/>
            <person name="Frapy E."/>
            <person name="Garry L."/>
            <person name="Ghigo J.M."/>
            <person name="Gilles A.M."/>
            <person name="Johnson J."/>
            <person name="Le Bouguenec C."/>
            <person name="Lescat M."/>
            <person name="Mangenot S."/>
            <person name="Martinez-Jehanne V."/>
            <person name="Matic I."/>
            <person name="Nassif X."/>
            <person name="Oztas S."/>
            <person name="Petit M.A."/>
            <person name="Pichon C."/>
            <person name="Rouy Z."/>
            <person name="Ruf C.S."/>
            <person name="Schneider D."/>
            <person name="Tourret J."/>
            <person name="Vacherie B."/>
            <person name="Vallenet D."/>
            <person name="Medigue C."/>
            <person name="Rocha E.P.C."/>
            <person name="Denamur E."/>
        </authorList>
    </citation>
    <scope>NUCLEOTIDE SEQUENCE [LARGE SCALE GENOMIC DNA]</scope>
    <source>
        <strain>UMN026 / ExPEC</strain>
    </source>
</reference>
<dbReference type="EC" id="3.1.5.1" evidence="1"/>
<dbReference type="EMBL" id="CU928163">
    <property type="protein sequence ID" value="CAR11379.1"/>
    <property type="molecule type" value="Genomic_DNA"/>
</dbReference>
<dbReference type="RefSeq" id="WP_000057068.1">
    <property type="nucleotide sequence ID" value="NC_011751.1"/>
</dbReference>
<dbReference type="RefSeq" id="YP_002410935.1">
    <property type="nucleotide sequence ID" value="NC_011751.1"/>
</dbReference>
<dbReference type="SMR" id="B7N829"/>
<dbReference type="STRING" id="585056.ECUMN_0158"/>
<dbReference type="KEGG" id="eum:ECUMN_0158"/>
<dbReference type="PATRIC" id="fig|585056.7.peg.351"/>
<dbReference type="HOGENOM" id="CLU_028163_2_1_6"/>
<dbReference type="Proteomes" id="UP000007097">
    <property type="component" value="Chromosome"/>
</dbReference>
<dbReference type="GO" id="GO:0008832">
    <property type="term" value="F:dGTPase activity"/>
    <property type="evidence" value="ECO:0007669"/>
    <property type="project" value="UniProtKB-UniRule"/>
</dbReference>
<dbReference type="GO" id="GO:0000287">
    <property type="term" value="F:magnesium ion binding"/>
    <property type="evidence" value="ECO:0007669"/>
    <property type="project" value="UniProtKB-UniRule"/>
</dbReference>
<dbReference type="GO" id="GO:0006203">
    <property type="term" value="P:dGTP catabolic process"/>
    <property type="evidence" value="ECO:0007669"/>
    <property type="project" value="InterPro"/>
</dbReference>
<dbReference type="CDD" id="cd00077">
    <property type="entry name" value="HDc"/>
    <property type="match status" value="1"/>
</dbReference>
<dbReference type="FunFam" id="1.10.3210.10:FF:000009">
    <property type="entry name" value="Deoxyguanosinetriphosphate triphosphohydrolase"/>
    <property type="match status" value="1"/>
</dbReference>
<dbReference type="FunFam" id="1.10.3210.10:FF:000010">
    <property type="entry name" value="Deoxyguanosinetriphosphate triphosphohydrolase"/>
    <property type="match status" value="1"/>
</dbReference>
<dbReference type="FunFam" id="1.10.3410.10:FF:000001">
    <property type="entry name" value="Deoxyguanosinetriphosphate triphosphohydrolase"/>
    <property type="match status" value="1"/>
</dbReference>
<dbReference type="Gene3D" id="1.10.3210.10">
    <property type="entry name" value="Hypothetical protein af1432"/>
    <property type="match status" value="2"/>
</dbReference>
<dbReference type="Gene3D" id="1.10.3410.10">
    <property type="entry name" value="putative deoxyguanosinetriphosphate triphosphohydrolase like domain"/>
    <property type="match status" value="1"/>
</dbReference>
<dbReference type="HAMAP" id="MF_00030">
    <property type="entry name" value="dGTPase_type1"/>
    <property type="match status" value="1"/>
</dbReference>
<dbReference type="InterPro" id="IPR023293">
    <property type="entry name" value="dGTP_triP_hydro_central_sf"/>
</dbReference>
<dbReference type="InterPro" id="IPR006261">
    <property type="entry name" value="dGTPase"/>
</dbReference>
<dbReference type="InterPro" id="IPR050135">
    <property type="entry name" value="dGTPase-like"/>
</dbReference>
<dbReference type="InterPro" id="IPR020779">
    <property type="entry name" value="dNTPase_1"/>
</dbReference>
<dbReference type="InterPro" id="IPR003607">
    <property type="entry name" value="HD/PDEase_dom"/>
</dbReference>
<dbReference type="InterPro" id="IPR006674">
    <property type="entry name" value="HD_domain"/>
</dbReference>
<dbReference type="NCBIfam" id="TIGR01353">
    <property type="entry name" value="dGTP_triPase"/>
    <property type="match status" value="1"/>
</dbReference>
<dbReference type="NCBIfam" id="NF003429">
    <property type="entry name" value="PRK04926.1"/>
    <property type="match status" value="1"/>
</dbReference>
<dbReference type="PANTHER" id="PTHR11373:SF32">
    <property type="entry name" value="DEOXYGUANOSINETRIPHOSPHATE TRIPHOSPHOHYDROLASE"/>
    <property type="match status" value="1"/>
</dbReference>
<dbReference type="PANTHER" id="PTHR11373">
    <property type="entry name" value="DEOXYNUCLEOSIDE TRIPHOSPHATE TRIPHOSPHOHYDROLASE"/>
    <property type="match status" value="1"/>
</dbReference>
<dbReference type="Pfam" id="PF01966">
    <property type="entry name" value="HD"/>
    <property type="match status" value="1"/>
</dbReference>
<dbReference type="SMART" id="SM00471">
    <property type="entry name" value="HDc"/>
    <property type="match status" value="1"/>
</dbReference>
<dbReference type="SUPFAM" id="SSF109604">
    <property type="entry name" value="HD-domain/PDEase-like"/>
    <property type="match status" value="1"/>
</dbReference>
<dbReference type="PROSITE" id="PS51831">
    <property type="entry name" value="HD"/>
    <property type="match status" value="1"/>
</dbReference>
<comment type="function">
    <text evidence="1">dGTPase preferentially hydrolyzes dGTP over the other canonical NTPs.</text>
</comment>
<comment type="catalytic activity">
    <reaction evidence="1">
        <text>dGTP + H2O = 2'-deoxyguanosine + triphosphate + H(+)</text>
        <dbReference type="Rhea" id="RHEA:15193"/>
        <dbReference type="ChEBI" id="CHEBI:15377"/>
        <dbReference type="ChEBI" id="CHEBI:15378"/>
        <dbReference type="ChEBI" id="CHEBI:17172"/>
        <dbReference type="ChEBI" id="CHEBI:18036"/>
        <dbReference type="ChEBI" id="CHEBI:61429"/>
        <dbReference type="EC" id="3.1.5.1"/>
    </reaction>
</comment>
<comment type="cofactor">
    <cofactor evidence="1">
        <name>Mg(2+)</name>
        <dbReference type="ChEBI" id="CHEBI:18420"/>
    </cofactor>
</comment>
<comment type="subunit">
    <text evidence="1">Homotetramer.</text>
</comment>
<comment type="similarity">
    <text evidence="1">Belongs to the dGTPase family. Type 1 subfamily.</text>
</comment>
<name>DGTP_ECOLU</name>
<protein>
    <recommendedName>
        <fullName evidence="1">Deoxyguanosinetriphosphate triphosphohydrolase</fullName>
        <shortName evidence="1">dGTP triphosphohydrolase</shortName>
        <shortName evidence="1">dGTPase</shortName>
        <ecNumber evidence="1">3.1.5.1</ecNumber>
    </recommendedName>
</protein>
<feature type="chain" id="PRO_1000116441" description="Deoxyguanosinetriphosphate triphosphohydrolase">
    <location>
        <begin position="1"/>
        <end position="505"/>
    </location>
</feature>
<feature type="domain" description="HD" evidence="2">
    <location>
        <begin position="66"/>
        <end position="273"/>
    </location>
</feature>
<keyword id="KW-0378">Hydrolase</keyword>
<keyword id="KW-0460">Magnesium</keyword>